<feature type="chain" id="PRO_0000131928" description="Cytidylate kinase">
    <location>
        <begin position="1"/>
        <end position="224"/>
    </location>
</feature>
<feature type="binding site" evidence="1">
    <location>
        <begin position="11"/>
        <end position="19"/>
    </location>
    <ligand>
        <name>ATP</name>
        <dbReference type="ChEBI" id="CHEBI:30616"/>
    </ligand>
</feature>
<dbReference type="EC" id="2.7.4.25" evidence="1"/>
<dbReference type="EMBL" id="AL596170">
    <property type="protein sequence ID" value="CAC97283.1"/>
    <property type="molecule type" value="Genomic_DNA"/>
</dbReference>
<dbReference type="PIR" id="AC1689">
    <property type="entry name" value="AC1689"/>
</dbReference>
<dbReference type="RefSeq" id="WP_010991725.1">
    <property type="nucleotide sequence ID" value="NC_003212.1"/>
</dbReference>
<dbReference type="SMR" id="Q92A69"/>
<dbReference type="STRING" id="272626.gene:17566411"/>
<dbReference type="GeneID" id="93235392"/>
<dbReference type="KEGG" id="lin:cmk"/>
<dbReference type="eggNOG" id="COG0283">
    <property type="taxonomic scope" value="Bacteria"/>
</dbReference>
<dbReference type="HOGENOM" id="CLU_079959_0_2_9"/>
<dbReference type="OrthoDB" id="9807434at2"/>
<dbReference type="Proteomes" id="UP000002513">
    <property type="component" value="Chromosome"/>
</dbReference>
<dbReference type="GO" id="GO:0005829">
    <property type="term" value="C:cytosol"/>
    <property type="evidence" value="ECO:0007669"/>
    <property type="project" value="TreeGrafter"/>
</dbReference>
<dbReference type="GO" id="GO:0005524">
    <property type="term" value="F:ATP binding"/>
    <property type="evidence" value="ECO:0007669"/>
    <property type="project" value="UniProtKB-UniRule"/>
</dbReference>
<dbReference type="GO" id="GO:0036430">
    <property type="term" value="F:CMP kinase activity"/>
    <property type="evidence" value="ECO:0007669"/>
    <property type="project" value="RHEA"/>
</dbReference>
<dbReference type="GO" id="GO:0036431">
    <property type="term" value="F:dCMP kinase activity"/>
    <property type="evidence" value="ECO:0007669"/>
    <property type="project" value="RHEA"/>
</dbReference>
<dbReference type="GO" id="GO:0015949">
    <property type="term" value="P:nucleobase-containing small molecule interconversion"/>
    <property type="evidence" value="ECO:0007669"/>
    <property type="project" value="TreeGrafter"/>
</dbReference>
<dbReference type="GO" id="GO:0006220">
    <property type="term" value="P:pyrimidine nucleotide metabolic process"/>
    <property type="evidence" value="ECO:0007669"/>
    <property type="project" value="UniProtKB-UniRule"/>
</dbReference>
<dbReference type="CDD" id="cd02020">
    <property type="entry name" value="CMPK"/>
    <property type="match status" value="1"/>
</dbReference>
<dbReference type="FunFam" id="3.40.50.300:FF:000484">
    <property type="entry name" value="Cytidylate kinase"/>
    <property type="match status" value="1"/>
</dbReference>
<dbReference type="Gene3D" id="3.40.50.300">
    <property type="entry name" value="P-loop containing nucleotide triphosphate hydrolases"/>
    <property type="match status" value="1"/>
</dbReference>
<dbReference type="HAMAP" id="MF_00238">
    <property type="entry name" value="Cytidyl_kinase_type1"/>
    <property type="match status" value="1"/>
</dbReference>
<dbReference type="InterPro" id="IPR003136">
    <property type="entry name" value="Cytidylate_kin"/>
</dbReference>
<dbReference type="InterPro" id="IPR011994">
    <property type="entry name" value="Cytidylate_kinase_dom"/>
</dbReference>
<dbReference type="InterPro" id="IPR027417">
    <property type="entry name" value="P-loop_NTPase"/>
</dbReference>
<dbReference type="NCBIfam" id="TIGR00017">
    <property type="entry name" value="cmk"/>
    <property type="match status" value="1"/>
</dbReference>
<dbReference type="PANTHER" id="PTHR21299:SF2">
    <property type="entry name" value="CYTIDYLATE KINASE"/>
    <property type="match status" value="1"/>
</dbReference>
<dbReference type="PANTHER" id="PTHR21299">
    <property type="entry name" value="CYTIDYLATE KINASE/PANTOATE-BETA-ALANINE LIGASE"/>
    <property type="match status" value="1"/>
</dbReference>
<dbReference type="Pfam" id="PF02224">
    <property type="entry name" value="Cytidylate_kin"/>
    <property type="match status" value="1"/>
</dbReference>
<dbReference type="SUPFAM" id="SSF52540">
    <property type="entry name" value="P-loop containing nucleoside triphosphate hydrolases"/>
    <property type="match status" value="1"/>
</dbReference>
<reference key="1">
    <citation type="journal article" date="2001" name="Science">
        <title>Comparative genomics of Listeria species.</title>
        <authorList>
            <person name="Glaser P."/>
            <person name="Frangeul L."/>
            <person name="Buchrieser C."/>
            <person name="Rusniok C."/>
            <person name="Amend A."/>
            <person name="Baquero F."/>
            <person name="Berche P."/>
            <person name="Bloecker H."/>
            <person name="Brandt P."/>
            <person name="Chakraborty T."/>
            <person name="Charbit A."/>
            <person name="Chetouani F."/>
            <person name="Couve E."/>
            <person name="de Daruvar A."/>
            <person name="Dehoux P."/>
            <person name="Domann E."/>
            <person name="Dominguez-Bernal G."/>
            <person name="Duchaud E."/>
            <person name="Durant L."/>
            <person name="Dussurget O."/>
            <person name="Entian K.-D."/>
            <person name="Fsihi H."/>
            <person name="Garcia-del Portillo F."/>
            <person name="Garrido P."/>
            <person name="Gautier L."/>
            <person name="Goebel W."/>
            <person name="Gomez-Lopez N."/>
            <person name="Hain T."/>
            <person name="Hauf J."/>
            <person name="Jackson D."/>
            <person name="Jones L.-M."/>
            <person name="Kaerst U."/>
            <person name="Kreft J."/>
            <person name="Kuhn M."/>
            <person name="Kunst F."/>
            <person name="Kurapkat G."/>
            <person name="Madueno E."/>
            <person name="Maitournam A."/>
            <person name="Mata Vicente J."/>
            <person name="Ng E."/>
            <person name="Nedjari H."/>
            <person name="Nordsiek G."/>
            <person name="Novella S."/>
            <person name="de Pablos B."/>
            <person name="Perez-Diaz J.-C."/>
            <person name="Purcell R."/>
            <person name="Remmel B."/>
            <person name="Rose M."/>
            <person name="Schlueter T."/>
            <person name="Simoes N."/>
            <person name="Tierrez A."/>
            <person name="Vazquez-Boland J.-A."/>
            <person name="Voss H."/>
            <person name="Wehland J."/>
            <person name="Cossart P."/>
        </authorList>
    </citation>
    <scope>NUCLEOTIDE SEQUENCE [LARGE SCALE GENOMIC DNA]</scope>
    <source>
        <strain>ATCC BAA-680 / CLIP 11262</strain>
    </source>
</reference>
<comment type="catalytic activity">
    <reaction evidence="1">
        <text>CMP + ATP = CDP + ADP</text>
        <dbReference type="Rhea" id="RHEA:11600"/>
        <dbReference type="ChEBI" id="CHEBI:30616"/>
        <dbReference type="ChEBI" id="CHEBI:58069"/>
        <dbReference type="ChEBI" id="CHEBI:60377"/>
        <dbReference type="ChEBI" id="CHEBI:456216"/>
        <dbReference type="EC" id="2.7.4.25"/>
    </reaction>
</comment>
<comment type="catalytic activity">
    <reaction evidence="1">
        <text>dCMP + ATP = dCDP + ADP</text>
        <dbReference type="Rhea" id="RHEA:25094"/>
        <dbReference type="ChEBI" id="CHEBI:30616"/>
        <dbReference type="ChEBI" id="CHEBI:57566"/>
        <dbReference type="ChEBI" id="CHEBI:58593"/>
        <dbReference type="ChEBI" id="CHEBI:456216"/>
        <dbReference type="EC" id="2.7.4.25"/>
    </reaction>
</comment>
<comment type="subcellular location">
    <subcellularLocation>
        <location evidence="1">Cytoplasm</location>
    </subcellularLocation>
</comment>
<comment type="similarity">
    <text evidence="1">Belongs to the cytidylate kinase family. Type 1 subfamily.</text>
</comment>
<name>KCY_LISIN</name>
<proteinExistence type="inferred from homology"/>
<sequence>MTKKICIAIDGPAAAGKSTVAKIVAKKLRFVYIDTGAMYRAVTYIALKNNVAYEDEMAIDALLKKTVIRFEPGEVQQVFVNEENVTDVIRSLEVTNHVSIVAAHPAIREALQERQQVFATEGGIVMDGRDIGTAVLPNAELKIFLLASVEERAERRYKENMAKGFAGDLNQLKKEIEERDHLDYTREHSPLKKANDAIEVDTTSMSIDEVANKILSLAEQKIQN</sequence>
<accession>Q92A69</accession>
<evidence type="ECO:0000255" key="1">
    <source>
        <dbReference type="HAMAP-Rule" id="MF_00238"/>
    </source>
</evidence>
<gene>
    <name evidence="1" type="primary">cmk</name>
    <name type="ordered locus">lin2053</name>
</gene>
<protein>
    <recommendedName>
        <fullName evidence="1">Cytidylate kinase</fullName>
        <shortName evidence="1">CK</shortName>
        <ecNumber evidence="1">2.7.4.25</ecNumber>
    </recommendedName>
    <alternativeName>
        <fullName evidence="1">Cytidine monophosphate kinase</fullName>
        <shortName evidence="1">CMP kinase</shortName>
    </alternativeName>
</protein>
<organism>
    <name type="scientific">Listeria innocua serovar 6a (strain ATCC BAA-680 / CLIP 11262)</name>
    <dbReference type="NCBI Taxonomy" id="272626"/>
    <lineage>
        <taxon>Bacteria</taxon>
        <taxon>Bacillati</taxon>
        <taxon>Bacillota</taxon>
        <taxon>Bacilli</taxon>
        <taxon>Bacillales</taxon>
        <taxon>Listeriaceae</taxon>
        <taxon>Listeria</taxon>
    </lineage>
</organism>
<keyword id="KW-0067">ATP-binding</keyword>
<keyword id="KW-0963">Cytoplasm</keyword>
<keyword id="KW-0418">Kinase</keyword>
<keyword id="KW-0547">Nucleotide-binding</keyword>
<keyword id="KW-0808">Transferase</keyword>